<feature type="chain" id="PRO_1000185181" description="Rhamnulokinase">
    <location>
        <begin position="1"/>
        <end position="489"/>
    </location>
</feature>
<feature type="active site" description="Proton acceptor" evidence="1">
    <location>
        <position position="237"/>
    </location>
</feature>
<feature type="binding site" evidence="1">
    <location>
        <begin position="13"/>
        <end position="17"/>
    </location>
    <ligand>
        <name>ATP</name>
        <dbReference type="ChEBI" id="CHEBI:30616"/>
    </ligand>
</feature>
<feature type="binding site" evidence="1">
    <location>
        <position position="83"/>
    </location>
    <ligand>
        <name>substrate</name>
    </ligand>
</feature>
<feature type="binding site" evidence="1">
    <location>
        <begin position="236"/>
        <end position="238"/>
    </location>
    <ligand>
        <name>substrate</name>
    </ligand>
</feature>
<feature type="binding site" evidence="1">
    <location>
        <position position="259"/>
    </location>
    <ligand>
        <name>ATP</name>
        <dbReference type="ChEBI" id="CHEBI:30616"/>
    </ligand>
</feature>
<feature type="binding site" evidence="1">
    <location>
        <position position="296"/>
    </location>
    <ligand>
        <name>substrate</name>
    </ligand>
</feature>
<feature type="binding site" evidence="1">
    <location>
        <position position="304"/>
    </location>
    <ligand>
        <name>ATP</name>
        <dbReference type="ChEBI" id="CHEBI:30616"/>
    </ligand>
</feature>
<feature type="binding site" evidence="1">
    <location>
        <position position="402"/>
    </location>
    <ligand>
        <name>ATP</name>
        <dbReference type="ChEBI" id="CHEBI:30616"/>
    </ligand>
</feature>
<feature type="disulfide bond" evidence="1">
    <location>
        <begin position="68"/>
        <end position="222"/>
    </location>
</feature>
<feature type="disulfide bond" evidence="1">
    <location>
        <begin position="353"/>
        <end position="370"/>
    </location>
</feature>
<feature type="disulfide bond" evidence="1">
    <location>
        <begin position="413"/>
        <end position="417"/>
    </location>
</feature>
<accession>B7UNM5</accession>
<comment type="function">
    <text evidence="1">Involved in the catabolism of L-rhamnose (6-deoxy-L-mannose). Catalyzes the transfer of the gamma-phosphate group from ATP to the 1-hydroxyl group of L-rhamnulose to yield L-rhamnulose 1-phosphate.</text>
</comment>
<comment type="catalytic activity">
    <reaction evidence="1">
        <text>L-rhamnulose + ATP = L-rhamnulose 1-phosphate + ADP + H(+)</text>
        <dbReference type="Rhea" id="RHEA:20117"/>
        <dbReference type="ChEBI" id="CHEBI:15378"/>
        <dbReference type="ChEBI" id="CHEBI:17897"/>
        <dbReference type="ChEBI" id="CHEBI:30616"/>
        <dbReference type="ChEBI" id="CHEBI:58313"/>
        <dbReference type="ChEBI" id="CHEBI:456216"/>
        <dbReference type="EC" id="2.7.1.5"/>
    </reaction>
</comment>
<comment type="cofactor">
    <cofactor evidence="1">
        <name>Mg(2+)</name>
        <dbReference type="ChEBI" id="CHEBI:18420"/>
    </cofactor>
</comment>
<comment type="pathway">
    <text evidence="1">Carbohydrate degradation; L-rhamnose degradation; glycerone phosphate from L-rhamnose: step 2/3.</text>
</comment>
<comment type="subunit">
    <text evidence="1">Monomer.</text>
</comment>
<comment type="similarity">
    <text evidence="1">Belongs to the rhamnulokinase family.</text>
</comment>
<proteinExistence type="inferred from homology"/>
<evidence type="ECO:0000255" key="1">
    <source>
        <dbReference type="HAMAP-Rule" id="MF_01535"/>
    </source>
</evidence>
<gene>
    <name evidence="1" type="primary">rhaB</name>
    <name type="ordered locus">E2348C_4209</name>
</gene>
<reference key="1">
    <citation type="journal article" date="2009" name="J. Bacteriol.">
        <title>Complete genome sequence and comparative genome analysis of enteropathogenic Escherichia coli O127:H6 strain E2348/69.</title>
        <authorList>
            <person name="Iguchi A."/>
            <person name="Thomson N.R."/>
            <person name="Ogura Y."/>
            <person name="Saunders D."/>
            <person name="Ooka T."/>
            <person name="Henderson I.R."/>
            <person name="Harris D."/>
            <person name="Asadulghani M."/>
            <person name="Kurokawa K."/>
            <person name="Dean P."/>
            <person name="Kenny B."/>
            <person name="Quail M.A."/>
            <person name="Thurston S."/>
            <person name="Dougan G."/>
            <person name="Hayashi T."/>
            <person name="Parkhill J."/>
            <person name="Frankel G."/>
        </authorList>
    </citation>
    <scope>NUCLEOTIDE SEQUENCE [LARGE SCALE GENOMIC DNA]</scope>
    <source>
        <strain>E2348/69 / EPEC</strain>
    </source>
</reference>
<name>RHAB_ECO27</name>
<organism>
    <name type="scientific">Escherichia coli O127:H6 (strain E2348/69 / EPEC)</name>
    <dbReference type="NCBI Taxonomy" id="574521"/>
    <lineage>
        <taxon>Bacteria</taxon>
        <taxon>Pseudomonadati</taxon>
        <taxon>Pseudomonadota</taxon>
        <taxon>Gammaproteobacteria</taxon>
        <taxon>Enterobacterales</taxon>
        <taxon>Enterobacteriaceae</taxon>
        <taxon>Escherichia</taxon>
    </lineage>
</organism>
<keyword id="KW-0067">ATP-binding</keyword>
<keyword id="KW-1015">Disulfide bond</keyword>
<keyword id="KW-0418">Kinase</keyword>
<keyword id="KW-0460">Magnesium</keyword>
<keyword id="KW-0547">Nucleotide-binding</keyword>
<keyword id="KW-1185">Reference proteome</keyword>
<keyword id="KW-0684">Rhamnose metabolism</keyword>
<keyword id="KW-0808">Transferase</keyword>
<dbReference type="EC" id="2.7.1.5" evidence="1"/>
<dbReference type="EMBL" id="FM180568">
    <property type="protein sequence ID" value="CAS11757.1"/>
    <property type="molecule type" value="Genomic_DNA"/>
</dbReference>
<dbReference type="RefSeq" id="WP_000144099.1">
    <property type="nucleotide sequence ID" value="NC_011601.1"/>
</dbReference>
<dbReference type="SMR" id="B7UNM5"/>
<dbReference type="KEGG" id="ecg:E2348C_4209"/>
<dbReference type="HOGENOM" id="CLU_039395_0_0_6"/>
<dbReference type="UniPathway" id="UPA00541">
    <property type="reaction ID" value="UER00602"/>
</dbReference>
<dbReference type="Proteomes" id="UP000008205">
    <property type="component" value="Chromosome"/>
</dbReference>
<dbReference type="GO" id="GO:0005829">
    <property type="term" value="C:cytosol"/>
    <property type="evidence" value="ECO:0007669"/>
    <property type="project" value="TreeGrafter"/>
</dbReference>
<dbReference type="GO" id="GO:0005524">
    <property type="term" value="F:ATP binding"/>
    <property type="evidence" value="ECO:0007669"/>
    <property type="project" value="UniProtKB-KW"/>
</dbReference>
<dbReference type="GO" id="GO:0004370">
    <property type="term" value="F:glycerol kinase activity"/>
    <property type="evidence" value="ECO:0007669"/>
    <property type="project" value="TreeGrafter"/>
</dbReference>
<dbReference type="GO" id="GO:0008993">
    <property type="term" value="F:rhamnulokinase activity"/>
    <property type="evidence" value="ECO:0007669"/>
    <property type="project" value="UniProtKB-UniRule"/>
</dbReference>
<dbReference type="GO" id="GO:0006071">
    <property type="term" value="P:glycerol metabolic process"/>
    <property type="evidence" value="ECO:0007669"/>
    <property type="project" value="TreeGrafter"/>
</dbReference>
<dbReference type="GO" id="GO:0019301">
    <property type="term" value="P:rhamnose catabolic process"/>
    <property type="evidence" value="ECO:0007669"/>
    <property type="project" value="UniProtKB-UniRule"/>
</dbReference>
<dbReference type="CDD" id="cd07771">
    <property type="entry name" value="ASKHA_NBD_FGGY_RhaB-like"/>
    <property type="match status" value="1"/>
</dbReference>
<dbReference type="FunFam" id="3.30.420.40:FF:000064">
    <property type="entry name" value="Rhamnulokinase"/>
    <property type="match status" value="1"/>
</dbReference>
<dbReference type="FunFam" id="3.30.420.40:FF:000073">
    <property type="entry name" value="Rhamnulokinase"/>
    <property type="match status" value="1"/>
</dbReference>
<dbReference type="Gene3D" id="3.30.420.40">
    <property type="match status" value="2"/>
</dbReference>
<dbReference type="HAMAP" id="MF_01535">
    <property type="entry name" value="Rhamnulokinase"/>
    <property type="match status" value="1"/>
</dbReference>
<dbReference type="InterPro" id="IPR043129">
    <property type="entry name" value="ATPase_NBD"/>
</dbReference>
<dbReference type="InterPro" id="IPR018485">
    <property type="entry name" value="FGGY_C"/>
</dbReference>
<dbReference type="InterPro" id="IPR018484">
    <property type="entry name" value="FGGY_N"/>
</dbReference>
<dbReference type="InterPro" id="IPR013449">
    <property type="entry name" value="Rhamnulokinase"/>
</dbReference>
<dbReference type="NCBIfam" id="NF007925">
    <property type="entry name" value="PRK10640.1"/>
    <property type="match status" value="1"/>
</dbReference>
<dbReference type="NCBIfam" id="TIGR02627">
    <property type="entry name" value="rhamnulo_kin"/>
    <property type="match status" value="1"/>
</dbReference>
<dbReference type="PANTHER" id="PTHR10196:SF93">
    <property type="entry name" value="L-RHAMNULOKINASE"/>
    <property type="match status" value="1"/>
</dbReference>
<dbReference type="PANTHER" id="PTHR10196">
    <property type="entry name" value="SUGAR KINASE"/>
    <property type="match status" value="1"/>
</dbReference>
<dbReference type="Pfam" id="PF02782">
    <property type="entry name" value="FGGY_C"/>
    <property type="match status" value="1"/>
</dbReference>
<dbReference type="Pfam" id="PF00370">
    <property type="entry name" value="FGGY_N"/>
    <property type="match status" value="1"/>
</dbReference>
<dbReference type="SUPFAM" id="SSF53067">
    <property type="entry name" value="Actin-like ATPase domain"/>
    <property type="match status" value="2"/>
</dbReference>
<sequence length="489" mass="54112">MTFRNCVAVDLGASSGRVMLARYERECRSLTLREIHRFNNGLHSQNGYVTWNVDSLESAIRLGLNKVCEEGIRIDSIGIDTWGVDFVLLDQHGQRVGLPVAYRDSRTNGLMAQAQQQLGKRDIYQRSGIQFLPFNTIYQLRALTEQQPELIPHIAHALLIPDYFSYRLTGKMNWEYTNATTTQLVNINSDDWDESLLAWSGANKAWFGRPTHPGNVIGHWICPQGNEIPVVAVASHDTASAVIASPLNGSRAAYLSSGTWSLMGFESQTPFTNDTALAANITNEGGAEGRYRVLKNIMGLWLLQRVLQERQINDLPALIAATQALPACRFIINPNDDRFINPDEMCSEIQAACRETAQPIPENDAELARCIFDSLALLYADVLHELAQLRGEDFSQLHIVGGGCQNTLLNQLCADACGIRVIAGPVEASTLGNIGIQLMTLDELNNVDDFRQVVSTTANLTTFTPNPDSEIAHYVAQIHSTRQTKELCA</sequence>
<protein>
    <recommendedName>
        <fullName evidence="1">Rhamnulokinase</fullName>
        <shortName evidence="1">RhaB</shortName>
        <ecNumber evidence="1">2.7.1.5</ecNumber>
    </recommendedName>
    <alternativeName>
        <fullName evidence="1">ATP:L-rhamnulose phosphotransferase</fullName>
    </alternativeName>
    <alternativeName>
        <fullName evidence="1">L-rhamnulose 1-kinase</fullName>
    </alternativeName>
    <alternativeName>
        <fullName evidence="1">Rhamnulose kinase</fullName>
    </alternativeName>
</protein>